<dbReference type="EMBL" id="BC004715">
    <property type="protein sequence ID" value="AAH04715.1"/>
    <property type="molecule type" value="mRNA"/>
</dbReference>
<dbReference type="EMBL" id="BC085296">
    <property type="protein sequence ID" value="AAH85296.1"/>
    <property type="molecule type" value="mRNA"/>
</dbReference>
<dbReference type="PDB" id="7O37">
    <property type="method" value="EM"/>
    <property type="resolution" value="3.20 A"/>
    <property type="chains" value="I=1-113"/>
</dbReference>
<dbReference type="PDB" id="7O3C">
    <property type="method" value="EM"/>
    <property type="resolution" value="3.30 A"/>
    <property type="chains" value="I=1-113"/>
</dbReference>
<dbReference type="PDB" id="7O3E">
    <property type="method" value="EM"/>
    <property type="resolution" value="3.60 A"/>
    <property type="chains" value="I=1-113"/>
</dbReference>
<dbReference type="PDB" id="8PW5">
    <property type="method" value="EM"/>
    <property type="resolution" value="3.60 A"/>
    <property type="chains" value="I=1-113"/>
</dbReference>
<dbReference type="PDBsum" id="7O37"/>
<dbReference type="PDBsum" id="7O3C"/>
<dbReference type="PDBsum" id="7O3E"/>
<dbReference type="PDBsum" id="8PW5"/>
<dbReference type="EMDB" id="EMD-12702"/>
<dbReference type="EMDB" id="EMD-12703"/>
<dbReference type="EMDB" id="EMD-12705"/>
<dbReference type="EMDB" id="EMD-17989"/>
<dbReference type="SMR" id="Q99KD6"/>
<dbReference type="SwissPalm" id="Q99KD6"/>
<dbReference type="PeptideAtlas" id="Q99KD6"/>
<dbReference type="AGR" id="MGI:106015"/>
<dbReference type="MGI" id="MGI:106015">
    <property type="gene designation" value="Cox7a2l"/>
</dbReference>
<dbReference type="OrthoDB" id="5966508at2759"/>
<dbReference type="UniPathway" id="UPA00705"/>
<dbReference type="ChiTaRS" id="Cox7a2l">
    <property type="organism name" value="mouse"/>
</dbReference>
<dbReference type="GO" id="GO:0005743">
    <property type="term" value="C:mitochondrial inner membrane"/>
    <property type="evidence" value="ECO:0000314"/>
    <property type="project" value="UniProtKB"/>
</dbReference>
<dbReference type="GO" id="GO:0005739">
    <property type="term" value="C:mitochondrion"/>
    <property type="evidence" value="ECO:0000314"/>
    <property type="project" value="UniProtKB"/>
</dbReference>
<dbReference type="GO" id="GO:0098803">
    <property type="term" value="C:respiratory chain complex"/>
    <property type="evidence" value="ECO:0000314"/>
    <property type="project" value="UniProtKB"/>
</dbReference>
<dbReference type="GO" id="GO:0045277">
    <property type="term" value="C:respiratory chain complex IV"/>
    <property type="evidence" value="ECO:0007669"/>
    <property type="project" value="InterPro"/>
</dbReference>
<dbReference type="GO" id="GO:0030674">
    <property type="term" value="F:protein-macromolecule adaptor activity"/>
    <property type="evidence" value="ECO:0000314"/>
    <property type="project" value="UniProtKB"/>
</dbReference>
<dbReference type="GO" id="GO:0006123">
    <property type="term" value="P:mitochondrial electron transport, cytochrome c to oxygen"/>
    <property type="evidence" value="ECO:0007669"/>
    <property type="project" value="InterPro"/>
</dbReference>
<dbReference type="GO" id="GO:0097250">
    <property type="term" value="P:mitochondrial respirasome assembly"/>
    <property type="evidence" value="ECO:0000314"/>
    <property type="project" value="UniProtKB"/>
</dbReference>
<dbReference type="GO" id="GO:0002082">
    <property type="term" value="P:regulation of oxidative phosphorylation"/>
    <property type="evidence" value="ECO:0000314"/>
    <property type="project" value="UniProtKB"/>
</dbReference>
<dbReference type="CDD" id="cd00928">
    <property type="entry name" value="Cyt_c_Oxidase_VIIa"/>
    <property type="match status" value="1"/>
</dbReference>
<dbReference type="FunFam" id="4.10.91.10:FF:000001">
    <property type="entry name" value="Cytochrome c oxidase subunit 7A1, mitochondrial"/>
    <property type="match status" value="1"/>
</dbReference>
<dbReference type="Gene3D" id="4.10.91.10">
    <property type="entry name" value="Cytochrome c oxidase, subunit VIIa"/>
    <property type="match status" value="1"/>
</dbReference>
<dbReference type="InterPro" id="IPR039297">
    <property type="entry name" value="COX7a"/>
</dbReference>
<dbReference type="InterPro" id="IPR017267">
    <property type="entry name" value="Cyt_c_oxidase_su7a-rel_mt"/>
</dbReference>
<dbReference type="InterPro" id="IPR036539">
    <property type="entry name" value="Cyt_c_oxidase_su7a_sf"/>
</dbReference>
<dbReference type="InterPro" id="IPR003177">
    <property type="entry name" value="Cytc_oxidase_su7a_met"/>
</dbReference>
<dbReference type="PANTHER" id="PTHR10510">
    <property type="entry name" value="CYTOCHROME C OXIDASE POLYPEPTIDE 7A"/>
    <property type="match status" value="1"/>
</dbReference>
<dbReference type="PANTHER" id="PTHR10510:SF2">
    <property type="entry name" value="CYTOCHROME C OXIDASE SUBUNIT 7A-RELATED PROTEIN, MITOCHONDRIAL"/>
    <property type="match status" value="1"/>
</dbReference>
<dbReference type="Pfam" id="PF02238">
    <property type="entry name" value="COX7a"/>
    <property type="match status" value="1"/>
</dbReference>
<dbReference type="PIRSF" id="PIRSF037710">
    <property type="entry name" value="COX7A-rel_mt"/>
    <property type="match status" value="1"/>
</dbReference>
<dbReference type="SUPFAM" id="SSF81419">
    <property type="entry name" value="Mitochondrial cytochrome c oxidase subunit VIIa"/>
    <property type="match status" value="1"/>
</dbReference>
<reference key="1">
    <citation type="journal article" date="2004" name="Genome Res.">
        <title>The status, quality, and expansion of the NIH full-length cDNA project: the Mammalian Gene Collection (MGC).</title>
        <authorList>
            <consortium name="The MGC Project Team"/>
        </authorList>
    </citation>
    <scope>NUCLEOTIDE SEQUENCE [LARGE SCALE MRNA]</scope>
    <source>
        <strain>129</strain>
        <strain>FVB/N</strain>
    </source>
</reference>
<reference key="2">
    <citation type="journal article" date="2013" name="Nat. Commun.">
        <title>A stabilizing factor for mitochondrial respiratory supercomplex assembly regulates energy metabolism in muscle.</title>
        <authorList>
            <person name="Ikeda K."/>
            <person name="Shiba S."/>
            <person name="Horie-Inoue K."/>
            <person name="Shimokata K."/>
            <person name="Inoue S."/>
        </authorList>
    </citation>
    <scope>FUNCTION</scope>
    <scope>DISRUPTION PHENOTYPE</scope>
</reference>
<reference key="3">
    <citation type="journal article" date="2013" name="Science">
        <title>Supercomplex assembly determines electron flux in the mitochondrial electron transport chain.</title>
        <authorList>
            <person name="Lapuente-Brun E."/>
            <person name="Moreno-Loshuertos R."/>
            <person name="Acin-Perez R."/>
            <person name="Latorre-Pellicer A."/>
            <person name="Colas C."/>
            <person name="Balsa E."/>
            <person name="Perales-Clemente E."/>
            <person name="Quiros P.M."/>
            <person name="Calvo E."/>
            <person name="Rodriguez-Hernandez M.A."/>
            <person name="Navas P."/>
            <person name="Cruz R."/>
            <person name="Carracedo A."/>
            <person name="Lopez-Otin C."/>
            <person name="Perez-Martos A."/>
            <person name="Fernandez-Silva P."/>
            <person name="Fernandez-Vizarra E."/>
            <person name="Enriquez J.A."/>
        </authorList>
    </citation>
    <scope>FUNCTION</scope>
    <scope>POLYMORPHISM</scope>
</reference>
<reference key="4">
    <citation type="journal article" date="2014" name="Cell Metab.">
        <title>The respiratory chain supercomplex organization is independent of COX7a2l isoforms.</title>
        <authorList>
            <person name="Mourier A."/>
            <person name="Matic S."/>
            <person name="Ruzzenente B."/>
            <person name="Larsson N.G."/>
            <person name="Milenkovic D."/>
        </authorList>
    </citation>
    <scope>FUNCTION</scope>
</reference>
<reference key="5">
    <citation type="journal article" date="2016" name="Cell Rep.">
        <title>COX7A2L is a mitochondrial complex III binding protein that stabilizes the III2+IV supercomplex without affecting respirasome formation.</title>
        <authorList>
            <person name="Perez-Perez R."/>
            <person name="Lobo-Jarne T."/>
            <person name="Milenkovic D."/>
            <person name="Mourier A."/>
            <person name="Bratic A."/>
            <person name="Garcia-Bartolome A."/>
            <person name="Fernandez-Vizarra E."/>
            <person name="Cadenas S."/>
            <person name="Delmiro A."/>
            <person name="Garcia-Consuegra I."/>
            <person name="Arenas J."/>
            <person name="Martin M.A."/>
            <person name="Larsson N.G."/>
            <person name="Ugalde C."/>
        </authorList>
    </citation>
    <scope>FUNCTION</scope>
    <scope>SUBCELLULAR LOCATIONE</scope>
    <scope>INTERACTION WITH MITOCHONDRIAL RESPIRATORY COMPLEXES</scope>
</reference>
<reference key="6">
    <citation type="journal article" date="2016" name="Nature">
        <title>Mechanism of super-assembly of respiratory complexes III and IV.</title>
        <authorList>
            <person name="Cogliati S."/>
            <person name="Calvo E."/>
            <person name="Loureiro M."/>
            <person name="Guaras A.M."/>
            <person name="Nieto-Arellano R."/>
            <person name="Garcia-Poyatos C."/>
            <person name="Ezkurdia I."/>
            <person name="Mercader N."/>
            <person name="Vazquez J."/>
            <person name="Enriquez J.A."/>
        </authorList>
    </citation>
    <scope>FUNCTION</scope>
    <scope>SUBCELLULAR LOCATION</scope>
    <scope>INTERACTION WITH MITOCHONDRIAL RESPIRATORY COMPLEXES</scope>
    <scope>MUTAGENESIS OF HIS-75</scope>
</reference>
<reference key="7">
    <citation type="journal article" date="2016" name="PLoS ONE">
        <title>COX7A2L/SCAFI and Pre-Complex III Modify Respiratory Chain Supercomplex Formation in Different Mouse Strains with a Bcs1l Mutation.</title>
        <authorList>
            <person name="Davoudi M."/>
            <person name="Kotarsky H."/>
            <person name="Hansson E."/>
            <person name="Kallijaervi J."/>
            <person name="Fellman V."/>
        </authorList>
    </citation>
    <scope>FUNCTION</scope>
</reference>
<reference key="8">
    <citation type="journal article" date="2019" name="Mol. Cell">
        <title>ER and nutrient stress promote assembly of respiratory chain supercomplexes through the PERK-eIF2alpha axis.</title>
        <authorList>
            <person name="Balsa E."/>
            <person name="Soustek M.S."/>
            <person name="Thomas A."/>
            <person name="Cogliati S."/>
            <person name="Garcia-Poyatos C."/>
            <person name="Martin-Garcia E."/>
            <person name="Jedrychowski M."/>
            <person name="Gygi S.P."/>
            <person name="Enriquez J.A."/>
            <person name="Puigserver P."/>
        </authorList>
    </citation>
    <scope>INDUCTION</scope>
</reference>
<reference key="9">
    <citation type="journal article" date="2020" name="Sci. Adv.">
        <title>Functional role of respiratory supercomplexes in mice: SCAF1 relevance and segmentation of the Qpool.</title>
        <authorList>
            <person name="Calvo E."/>
            <person name="Cogliati S."/>
            <person name="Hernansanz-Agustin P."/>
            <person name="Loureiro-Lopez M."/>
            <person name="Guaras A."/>
            <person name="Casuso R.A."/>
            <person name="Garcia-Marques F."/>
            <person name="Acin-Perez R."/>
            <person name="Marti-Mateos Y."/>
            <person name="Silla-Castro J.C."/>
            <person name="Carro-Alvarellos M."/>
            <person name="Huertas J.R."/>
            <person name="Vazquez J."/>
            <person name="Enriquez J.A."/>
        </authorList>
    </citation>
    <scope>FUNCTION</scope>
</reference>
<reference key="10">
    <citation type="journal article" date="2022" name="Nat. Metab.">
        <title>COX7A2L genetic variants determine cardiorespiratory fitness in mice and human.</title>
        <authorList>
            <person name="Benegiamo G."/>
            <person name="Bou Sleiman M."/>
            <person name="Wohlwend M."/>
            <person name="Rodriguez-Lopez S."/>
            <person name="Goeminne L.J.E."/>
            <person name="Laurila P.P."/>
            <person name="Klevjer M."/>
            <person name="Salonen M.K."/>
            <person name="Lahti J."/>
            <person name="Jha P."/>
            <person name="Cogliati S."/>
            <person name="Enriquez J.A."/>
            <person name="Brumpton B.M."/>
            <person name="Bye A."/>
            <person name="Eriksson J.G."/>
            <person name="Auwerx J."/>
        </authorList>
    </citation>
    <scope>POLYMORPHISM</scope>
    <scope>INDUCTION</scope>
</reference>
<reference evidence="19 20 21" key="11">
    <citation type="journal article" date="2021" name="Nature">
        <title>Structure and assembly of the mammalian mitochondrial supercomplex CIII2CIV.</title>
        <authorList>
            <person name="Vercellino I."/>
            <person name="Sazanov L.A."/>
        </authorList>
    </citation>
    <scope>STRUCTURE BY ELECTRON MICROSCOPY (3.20 ANGSTROMS) IN COMPLEX WITH MITOCHONDRIAL RESPIRATORY SUPERCOMPLEX</scope>
    <scope>FUNCTION</scope>
    <scope>SUBCELLULAR LOCATION</scope>
    <scope>INTERACTION WITH MITOCHONDRIAL RESPIRATORY COMPLEXES</scope>
</reference>
<reference evidence="22" key="12">
    <citation type="journal article" date="2024" name="Nat. Struct. Mol. Biol.">
        <title>SCAF1 drives the compositional diversity of mammalian respirasomes.</title>
        <authorList>
            <person name="Vercellino I."/>
            <person name="Sazanov L.A."/>
        </authorList>
    </citation>
    <scope>STRUCTURE BY ELECTRON MICROSCOPY (3.60 ANGSTROMS) IN COMPLEX WITH MITOCHONDRIAL RESPIRATORY SUPERCOMPLEX</scope>
    <scope>FUNCTION</scope>
    <scope>SUBCELLULAR LOCATION</scope>
    <scope>SUBUNIT</scope>
</reference>
<feature type="transit peptide" description="Mitochondrion" evidence="3">
    <location>
        <begin position="1"/>
        <end position="54"/>
    </location>
</feature>
<feature type="chain" id="PRO_0000461461" description="Cytochrome c oxidase subunit 7A2-like, mitochondrial">
    <location>
        <begin position="55"/>
        <end position="113"/>
    </location>
</feature>
<feature type="transmembrane region" description="Helical" evidence="12 14 20 21 22">
    <location>
        <begin position="81"/>
        <end position="106"/>
    </location>
</feature>
<feature type="modified residue" description="N6-acetyllysine" evidence="1">
    <location>
        <position position="68"/>
    </location>
</feature>
<feature type="mutagenesis site" description="Abolished ability to promote association between both mitochondrial respiratory complexes III (CIII) and IV (CIV)." evidence="8">
    <original>H</original>
    <variation>A</variation>
    <location>
        <position position="75"/>
    </location>
</feature>
<feature type="strand" evidence="23">
    <location>
        <begin position="3"/>
        <end position="6"/>
    </location>
</feature>
<feature type="turn" evidence="23">
    <location>
        <begin position="7"/>
        <end position="10"/>
    </location>
</feature>
<feature type="strand" evidence="23">
    <location>
        <begin position="11"/>
        <end position="14"/>
    </location>
</feature>
<feature type="helix" evidence="23">
    <location>
        <begin position="17"/>
        <end position="20"/>
    </location>
</feature>
<feature type="strand" evidence="23">
    <location>
        <begin position="37"/>
        <end position="39"/>
    </location>
</feature>
<feature type="helix" evidence="23">
    <location>
        <begin position="59"/>
        <end position="65"/>
    </location>
</feature>
<feature type="helix" evidence="23">
    <location>
        <begin position="74"/>
        <end position="76"/>
    </location>
</feature>
<feature type="helix" evidence="23">
    <location>
        <begin position="80"/>
        <end position="108"/>
    </location>
</feature>
<name>CO72R_MOUSE</name>
<evidence type="ECO:0000250" key="1">
    <source>
        <dbReference type="UniProtKB" id="O14548"/>
    </source>
</evidence>
<evidence type="ECO:0000250" key="2">
    <source>
        <dbReference type="UniProtKB" id="P56392"/>
    </source>
</evidence>
<evidence type="ECO:0000255" key="3"/>
<evidence type="ECO:0000269" key="4">
    <source>
    </source>
</evidence>
<evidence type="ECO:0000269" key="5">
    <source>
    </source>
</evidence>
<evidence type="ECO:0000269" key="6">
    <source>
    </source>
</evidence>
<evidence type="ECO:0000269" key="7">
    <source>
    </source>
</evidence>
<evidence type="ECO:0000269" key="8">
    <source>
    </source>
</evidence>
<evidence type="ECO:0000269" key="9">
    <source>
    </source>
</evidence>
<evidence type="ECO:0000269" key="10">
    <source>
    </source>
</evidence>
<evidence type="ECO:0000269" key="11">
    <source>
    </source>
</evidence>
<evidence type="ECO:0000269" key="12">
    <source>
    </source>
</evidence>
<evidence type="ECO:0000269" key="13">
    <source>
    </source>
</evidence>
<evidence type="ECO:0000269" key="14">
    <source>
    </source>
</evidence>
<evidence type="ECO:0000303" key="15">
    <source>
    </source>
</evidence>
<evidence type="ECO:0000303" key="16">
    <source>
    </source>
</evidence>
<evidence type="ECO:0000305" key="17"/>
<evidence type="ECO:0000312" key="18">
    <source>
        <dbReference type="MGI" id="MGI:106015"/>
    </source>
</evidence>
<evidence type="ECO:0000312" key="19">
    <source>
        <dbReference type="PDB" id="7O3E"/>
    </source>
</evidence>
<evidence type="ECO:0007744" key="20">
    <source>
        <dbReference type="PDB" id="7O37"/>
    </source>
</evidence>
<evidence type="ECO:0007744" key="21">
    <source>
        <dbReference type="PDB" id="7O3C"/>
    </source>
</evidence>
<evidence type="ECO:0007744" key="22">
    <source>
        <dbReference type="PDB" id="8PW5"/>
    </source>
</evidence>
<evidence type="ECO:0007829" key="23">
    <source>
        <dbReference type="PDB" id="7O37"/>
    </source>
</evidence>
<comment type="function">
    <text evidence="4 5 6 7 8 9 11 12 14">Assembly factor that mediates the formation of some mitochondrial respiratory supercomplexes (respirasomes), thereby promoting oxidative phosphorylation and energy metabolism (PubMed:23812712, PubMed:23857330, PubMed:25470551, PubMed:27545886, PubMed:27775717, PubMed:27997587, PubMed:32637615, PubMed:34616041, PubMed:38575788). Acts as a molecular adapter that associates with both mitochondrial respiratory complexes III (CIII) and IV (CIV), promoting their association (PubMed:27545886, PubMed:27775717, PubMed:32637615, PubMed:34616041, PubMed:38575788). Mediates the formation of various mitochondrial respiratory supercomplexes, such as MCIII(2)IV(2), composed of two CIII and two CIV, and the CS-respirasome (MCI(1)III(2)IV(2)), composed of one CI, two CIII and two CIV (PubMed:27775717, PubMed:32637615, PubMed:34616041, PubMed:38575788). Not involved in the formation of the canonical respirasome (MCI(1)III(2)IV(1)), composed of one CI, two CIII and one CIV (PubMed:38575788). The formation of different respirasomes is important for cell adaptation to oxygen conditions and prevent metabolic exhaustion: supercomplexes mediated by COX7A2L/SCAF1 are required to maintain oxidative phosphorylation upon low oxygen conditions and promote metabolic rewiring toward glycolysis (PubMed:38575788).</text>
</comment>
<comment type="pathway">
    <text evidence="2">Energy metabolism; oxidative phosphorylation.</text>
</comment>
<comment type="subunit">
    <text evidence="7 8 11 12 14">Interacts with the mitochondrial respiratory complexes III (CIII) and IV (CIV), promoting their association.</text>
</comment>
<comment type="subcellular location">
    <subcellularLocation>
        <location evidence="8 12 14">Mitochondrion inner membrane</location>
        <topology evidence="12 14">Single-pass membrane protein</topology>
    </subcellularLocation>
</comment>
<comment type="induction">
    <text evidence="10 13">Specifically induced in muscle upon exercise (PubMed:36253618). Expression is induced by ATF4 downstream of the EIF2AK3/PERK-mediated unfolded protein response, thereby increasing formation of respiratory chain supercomplexes (PubMed:31023583).</text>
</comment>
<comment type="polymorphism">
    <text evidence="4 13">There are two alleles for Cox7a2l/Scaf1 depending on mouse strains; a 113 amino-acid long protein, which corresponds to a functional protein (this protein), and a 111 amino-acid long protein caused by a two-amino acid deletion (AC Q61387) (PubMed:23812712, PubMed:36253618). Only the 113 amino-acid form (this proteins) can induce the mitochondrial respiratory supercomplex assembly by promoting interaction between complex III (CIII) and complex IV (CIV) (PubMed:23812712, PubMed:36253618).</text>
</comment>
<comment type="disruption phenotype">
    <text evidence="5">Knockout homozygous mice manifest decreased mitochondrial respiratory activities and impaired formation of mitochondrial supercomplexes in muscles (PubMed:23857330). Mice display muscle weakness and exhibit heat production failure in the cold (PubMed:23857330).</text>
</comment>
<comment type="similarity">
    <text evidence="17">Belongs to the cytochrome c oxidase VIIa family.</text>
</comment>
<organism>
    <name type="scientific">Mus musculus</name>
    <name type="common">Mouse</name>
    <dbReference type="NCBI Taxonomy" id="10090"/>
    <lineage>
        <taxon>Eukaryota</taxon>
        <taxon>Metazoa</taxon>
        <taxon>Chordata</taxon>
        <taxon>Craniata</taxon>
        <taxon>Vertebrata</taxon>
        <taxon>Euteleostomi</taxon>
        <taxon>Mammalia</taxon>
        <taxon>Eutheria</taxon>
        <taxon>Euarchontoglires</taxon>
        <taxon>Glires</taxon>
        <taxon>Rodentia</taxon>
        <taxon>Myomorpha</taxon>
        <taxon>Muroidea</taxon>
        <taxon>Muridae</taxon>
        <taxon>Murinae</taxon>
        <taxon>Mus</taxon>
        <taxon>Mus</taxon>
    </lineage>
</organism>
<gene>
    <name evidence="18" type="primary">Cox7a2l</name>
    <name evidence="16" type="synonym">Scaf1</name>
    <name evidence="15" type="synonym">Scafi</name>
</gene>
<proteinExistence type="evidence at protein level"/>
<accession>Q99KD6</accession>
<sequence>MYYKFSSFTQKLAGAWASEAYTPQGLKPVSTEAPPIIFATPTKLTSSVTAYDYSGKNKVPELQKFFQKADGVPIHLKRGLPDQMLYRTTMALTLGGTIYCLIALYMASQPRNK</sequence>
<keyword id="KW-0002">3D-structure</keyword>
<keyword id="KW-0007">Acetylation</keyword>
<keyword id="KW-0472">Membrane</keyword>
<keyword id="KW-0496">Mitochondrion</keyword>
<keyword id="KW-0999">Mitochondrion inner membrane</keyword>
<keyword id="KW-0809">Transit peptide</keyword>
<keyword id="KW-0812">Transmembrane</keyword>
<keyword id="KW-1133">Transmembrane helix</keyword>
<protein>
    <recommendedName>
        <fullName evidence="17">Cytochrome c oxidase subunit 7A2-like, mitochondrial</fullName>
    </recommendedName>
    <alternativeName>
        <fullName evidence="16">Supercomplex assembly factor 1</fullName>
    </alternativeName>
</protein>